<gene>
    <name evidence="1" type="primary">nadD</name>
    <name type="ordered locus">Xfasm12_1379</name>
</gene>
<feature type="chain" id="PRO_1000100803" description="Probable nicotinate-nucleotide adenylyltransferase">
    <location>
        <begin position="1"/>
        <end position="222"/>
    </location>
</feature>
<keyword id="KW-0067">ATP-binding</keyword>
<keyword id="KW-0520">NAD</keyword>
<keyword id="KW-0547">Nucleotide-binding</keyword>
<keyword id="KW-0548">Nucleotidyltransferase</keyword>
<keyword id="KW-0662">Pyridine nucleotide biosynthesis</keyword>
<keyword id="KW-0808">Transferase</keyword>
<accession>B0U379</accession>
<proteinExistence type="inferred from homology"/>
<evidence type="ECO:0000255" key="1">
    <source>
        <dbReference type="HAMAP-Rule" id="MF_00244"/>
    </source>
</evidence>
<dbReference type="EC" id="2.7.7.18" evidence="1"/>
<dbReference type="EMBL" id="CP000941">
    <property type="protein sequence ID" value="ACA12308.1"/>
    <property type="molecule type" value="Genomic_DNA"/>
</dbReference>
<dbReference type="RefSeq" id="WP_004086142.1">
    <property type="nucleotide sequence ID" value="NC_010513.1"/>
</dbReference>
<dbReference type="SMR" id="B0U379"/>
<dbReference type="KEGG" id="xfm:Xfasm12_1379"/>
<dbReference type="HOGENOM" id="CLU_069765_0_0_6"/>
<dbReference type="UniPathway" id="UPA00253">
    <property type="reaction ID" value="UER00332"/>
</dbReference>
<dbReference type="GO" id="GO:0005524">
    <property type="term" value="F:ATP binding"/>
    <property type="evidence" value="ECO:0007669"/>
    <property type="project" value="UniProtKB-KW"/>
</dbReference>
<dbReference type="GO" id="GO:0004515">
    <property type="term" value="F:nicotinate-nucleotide adenylyltransferase activity"/>
    <property type="evidence" value="ECO:0007669"/>
    <property type="project" value="UniProtKB-UniRule"/>
</dbReference>
<dbReference type="GO" id="GO:0009435">
    <property type="term" value="P:NAD biosynthetic process"/>
    <property type="evidence" value="ECO:0007669"/>
    <property type="project" value="UniProtKB-UniRule"/>
</dbReference>
<dbReference type="CDD" id="cd02165">
    <property type="entry name" value="NMNAT"/>
    <property type="match status" value="1"/>
</dbReference>
<dbReference type="Gene3D" id="3.40.50.620">
    <property type="entry name" value="HUPs"/>
    <property type="match status" value="1"/>
</dbReference>
<dbReference type="HAMAP" id="MF_00244">
    <property type="entry name" value="NaMN_adenylyltr"/>
    <property type="match status" value="1"/>
</dbReference>
<dbReference type="InterPro" id="IPR004821">
    <property type="entry name" value="Cyt_trans-like"/>
</dbReference>
<dbReference type="InterPro" id="IPR005248">
    <property type="entry name" value="NadD/NMNAT"/>
</dbReference>
<dbReference type="InterPro" id="IPR014729">
    <property type="entry name" value="Rossmann-like_a/b/a_fold"/>
</dbReference>
<dbReference type="NCBIfam" id="TIGR00125">
    <property type="entry name" value="cyt_tran_rel"/>
    <property type="match status" value="1"/>
</dbReference>
<dbReference type="NCBIfam" id="TIGR00482">
    <property type="entry name" value="nicotinate (nicotinamide) nucleotide adenylyltransferase"/>
    <property type="match status" value="1"/>
</dbReference>
<dbReference type="NCBIfam" id="NF000839">
    <property type="entry name" value="PRK00071.1-1"/>
    <property type="match status" value="1"/>
</dbReference>
<dbReference type="PANTHER" id="PTHR39321">
    <property type="entry name" value="NICOTINATE-NUCLEOTIDE ADENYLYLTRANSFERASE-RELATED"/>
    <property type="match status" value="1"/>
</dbReference>
<dbReference type="PANTHER" id="PTHR39321:SF3">
    <property type="entry name" value="PHOSPHOPANTETHEINE ADENYLYLTRANSFERASE"/>
    <property type="match status" value="1"/>
</dbReference>
<dbReference type="Pfam" id="PF01467">
    <property type="entry name" value="CTP_transf_like"/>
    <property type="match status" value="1"/>
</dbReference>
<dbReference type="SUPFAM" id="SSF52374">
    <property type="entry name" value="Nucleotidylyl transferase"/>
    <property type="match status" value="1"/>
</dbReference>
<reference key="1">
    <citation type="journal article" date="2010" name="J. Bacteriol.">
        <title>Whole genome sequences of two Xylella fastidiosa strains (M12 and M23) causing almond leaf scorch disease in California.</title>
        <authorList>
            <person name="Chen J."/>
            <person name="Xie G."/>
            <person name="Han S."/>
            <person name="Chertkov O."/>
            <person name="Sims D."/>
            <person name="Civerolo E.L."/>
        </authorList>
    </citation>
    <scope>NUCLEOTIDE SEQUENCE [LARGE SCALE GENOMIC DNA]</scope>
    <source>
        <strain>M12</strain>
    </source>
</reference>
<organism>
    <name type="scientific">Xylella fastidiosa (strain M12)</name>
    <dbReference type="NCBI Taxonomy" id="405440"/>
    <lineage>
        <taxon>Bacteria</taxon>
        <taxon>Pseudomonadati</taxon>
        <taxon>Pseudomonadota</taxon>
        <taxon>Gammaproteobacteria</taxon>
        <taxon>Lysobacterales</taxon>
        <taxon>Lysobacteraceae</taxon>
        <taxon>Xylella</taxon>
    </lineage>
</organism>
<comment type="function">
    <text evidence="1">Catalyzes the reversible adenylation of nicotinate mononucleotide (NaMN) to nicotinic acid adenine dinucleotide (NaAD).</text>
</comment>
<comment type="catalytic activity">
    <reaction evidence="1">
        <text>nicotinate beta-D-ribonucleotide + ATP + H(+) = deamido-NAD(+) + diphosphate</text>
        <dbReference type="Rhea" id="RHEA:22860"/>
        <dbReference type="ChEBI" id="CHEBI:15378"/>
        <dbReference type="ChEBI" id="CHEBI:30616"/>
        <dbReference type="ChEBI" id="CHEBI:33019"/>
        <dbReference type="ChEBI" id="CHEBI:57502"/>
        <dbReference type="ChEBI" id="CHEBI:58437"/>
        <dbReference type="EC" id="2.7.7.18"/>
    </reaction>
</comment>
<comment type="pathway">
    <text evidence="1">Cofactor biosynthesis; NAD(+) biosynthesis; deamido-NAD(+) from nicotinate D-ribonucleotide: step 1/1.</text>
</comment>
<comment type="similarity">
    <text evidence="1">Belongs to the NadD family.</text>
</comment>
<protein>
    <recommendedName>
        <fullName evidence="1">Probable nicotinate-nucleotide adenylyltransferase</fullName>
        <ecNumber evidence="1">2.7.7.18</ecNumber>
    </recommendedName>
    <alternativeName>
        <fullName evidence="1">Deamido-NAD(+) diphosphorylase</fullName>
    </alternativeName>
    <alternativeName>
        <fullName evidence="1">Deamido-NAD(+) pyrophosphorylase</fullName>
    </alternativeName>
    <alternativeName>
        <fullName evidence="1">Nicotinate mononucleotide adenylyltransferase</fullName>
        <shortName evidence="1">NaMN adenylyltransferase</shortName>
    </alternativeName>
</protein>
<sequence>MPSLHIFYGGTFDPVHVGHLAIARAAHAALQAPIALIPSADPPHRPTPGSSSMDRLRMLQLAVSKEPGLSADPRELRRAARQNRPSYTVDTLTEVRSELGPKTSIIWLLGADAFVNLSNWKDWQMLPELTHLVVANRPGITLQTQLPPKMATVFNHRWVQDPATLRKTPHGHLWLLNQHPNPSSASKVRAAISAAAHWEADLTPEVAQYIRTHGLYGIHDIN</sequence>
<name>NADD_XYLFM</name>